<accession>P18872</accession>
<accession>P18873</accession>
<comment type="function">
    <text evidence="5">Guanine nucleotide-binding proteins (G proteins) function as transducers downstream of G protein-coupled receptors (GPCRs) in numerous signaling cascades (PubMed:10926822). The alpha chain contains the guanine nucleotide binding site and alternates between an active, GTP-bound state and an inactive, GDP-bound state (PubMed:10926822). Signaling by an activated GPCR promotes GDP release and GTP binding (PubMed:10926822). The alpha subunit has a low GTPase activity that converts bound GTP to GDP, thereby terminating the signal (PubMed:10926822). Both GDP release and GTP hydrolysis are modulated by numerous regulatory proteins (PubMed:10926822). Signaling is mediated via effector proteins, such as adenylate cyclase (PubMed:10926822). Inhibits adenylate cyclase activity, leading to decreased intracellular cAMP levels (PubMed:10926822).</text>
</comment>
<comment type="catalytic activity">
    <reaction evidence="5">
        <text>GTP + H2O = GDP + phosphate + H(+)</text>
        <dbReference type="Rhea" id="RHEA:19669"/>
        <dbReference type="ChEBI" id="CHEBI:15377"/>
        <dbReference type="ChEBI" id="CHEBI:15378"/>
        <dbReference type="ChEBI" id="CHEBI:37565"/>
        <dbReference type="ChEBI" id="CHEBI:43474"/>
        <dbReference type="ChEBI" id="CHEBI:58189"/>
    </reaction>
    <physiologicalReaction direction="left-to-right" evidence="5">
        <dbReference type="Rhea" id="RHEA:19670"/>
    </physiologicalReaction>
</comment>
<comment type="activity regulation">
    <text evidence="5">The GTPase activity is promoted by GTPAse activators, such as RGS14, RGS16 and RGS19.</text>
</comment>
<comment type="subunit">
    <text evidence="3 5">G proteins are composed of 3 units; alpha, beta and gamma. The alpha chain contains the guanine nucleotide binding site. Forms a complex with GNB1 and GNG3 (By similarity). Interacts with RGS14 (PubMed:10926822). Interacts with RGS16 (PubMed:18434540). Interacts with RGS19 (By similarity). Interacts (when palmitoylated) with ADGRG3 (By similarity).</text>
</comment>
<comment type="interaction">
    <interactant intactId="EBI-1018790">
        <id>P18872-1</id>
    </interactant>
    <interactant intactId="EBI-643424">
        <id>P97428</id>
        <label>Rgs16</label>
    </interactant>
    <organismsDiffer>false</organismsDiffer>
    <experiments>2</experiments>
</comment>
<comment type="subcellular location">
    <subcellularLocation>
        <location evidence="6">Cell membrane</location>
    </subcellularLocation>
    <subcellularLocation>
        <location evidence="3">Membrane</location>
        <topology evidence="3">Lipid-anchor</topology>
    </subcellularLocation>
</comment>
<comment type="alternative products">
    <event type="alternative splicing"/>
    <isoform>
        <id>P18872-1</id>
        <name>Alpha-1</name>
        <sequence type="displayed"/>
    </isoform>
    <isoform>
        <id>P18872-2</id>
        <id>P18873-1</id>
        <name>Alpha-2</name>
        <sequence type="described" ref="VSP_031251"/>
    </isoform>
</comment>
<comment type="PTM">
    <text evidence="8">Histaminylated at Gln-205 residues by TGM2.</text>
</comment>
<comment type="similarity">
    <text evidence="10">Belongs to the G-alpha family. G(i/o/t/z) subfamily.</text>
</comment>
<proteinExistence type="evidence at protein level"/>
<sequence>MGCTLSAEERAALERSKAIEKNLKEDGISAAKDVKLLLLGAGESGKSTIVKQMKIIHEDGFSGEDVKQYKPVVYSNTIQSLAAIVRAMDTLGVEYGDKERKTDSKMVCDVVSRMEDTEPFSAELLSAMMRLWGDSGIQECFNRSREYQLNDSAKYYLDSLDRIGAGDYQPTEQDILRTRVKTTGIVETHFTFKNLHFRLFDVGGQRSERKKWIHCFEDVTAIIFCVALSGYDQVLHEDETTNRMHESLMLFDSICNNKFFIDTSIILFLNKKDLFGEKIKKSPLTICFPEYPGSNTYEDAAAYIQTQFESKNRSPNKEIYCHMTCATDTNNIQVVFDAVTDIIIANNLRGCGLY</sequence>
<gene>
    <name type="primary">Gnao1</name>
    <name type="synonym">Gna0</name>
    <name type="synonym">Gnao</name>
</gene>
<name>GNAO_MOUSE</name>
<organism>
    <name type="scientific">Mus musculus</name>
    <name type="common">Mouse</name>
    <dbReference type="NCBI Taxonomy" id="10090"/>
    <lineage>
        <taxon>Eukaryota</taxon>
        <taxon>Metazoa</taxon>
        <taxon>Chordata</taxon>
        <taxon>Craniata</taxon>
        <taxon>Vertebrata</taxon>
        <taxon>Euteleostomi</taxon>
        <taxon>Mammalia</taxon>
        <taxon>Eutheria</taxon>
        <taxon>Euarchontoglires</taxon>
        <taxon>Glires</taxon>
        <taxon>Rodentia</taxon>
        <taxon>Myomorpha</taxon>
        <taxon>Muroidea</taxon>
        <taxon>Muridae</taxon>
        <taxon>Murinae</taxon>
        <taxon>Mus</taxon>
        <taxon>Mus</taxon>
    </lineage>
</organism>
<keyword id="KW-0002">3D-structure</keyword>
<keyword id="KW-0025">Alternative splicing</keyword>
<keyword id="KW-1003">Cell membrane</keyword>
<keyword id="KW-0903">Direct protein sequencing</keyword>
<keyword id="KW-0342">GTP-binding</keyword>
<keyword id="KW-0378">Hydrolase</keyword>
<keyword id="KW-0449">Lipoprotein</keyword>
<keyword id="KW-0460">Magnesium</keyword>
<keyword id="KW-0472">Membrane</keyword>
<keyword id="KW-0479">Metal-binding</keyword>
<keyword id="KW-0519">Myristate</keyword>
<keyword id="KW-0547">Nucleotide-binding</keyword>
<keyword id="KW-0564">Palmitate</keyword>
<keyword id="KW-1185">Reference proteome</keyword>
<keyword id="KW-0807">Transducer</keyword>
<dbReference type="EC" id="3.6.5.-" evidence="5"/>
<dbReference type="EMBL" id="M36777">
    <property type="protein sequence ID" value="AAA37645.1"/>
    <property type="molecule type" value="mRNA"/>
</dbReference>
<dbReference type="EMBL" id="M36778">
    <property type="protein sequence ID" value="AAA74566.1"/>
    <property type="molecule type" value="mRNA"/>
</dbReference>
<dbReference type="EMBL" id="BC051989">
    <property type="protein sequence ID" value="AAH51989.1"/>
    <property type="molecule type" value="mRNA"/>
</dbReference>
<dbReference type="CCDS" id="CCDS22532.1">
    <molecule id="P18872-1"/>
</dbReference>
<dbReference type="CCDS" id="CCDS85585.1">
    <molecule id="P18872-2"/>
</dbReference>
<dbReference type="PIR" id="A36038">
    <property type="entry name" value="RGMSO1"/>
</dbReference>
<dbReference type="PIR" id="B36038">
    <property type="entry name" value="RGMSO2"/>
</dbReference>
<dbReference type="RefSeq" id="NP_001106855.1">
    <molecule id="P18872-2"/>
    <property type="nucleotide sequence ID" value="NM_001113384.2"/>
</dbReference>
<dbReference type="RefSeq" id="NP_001401836.1">
    <molecule id="P18872-1"/>
    <property type="nucleotide sequence ID" value="NM_001414907.1"/>
</dbReference>
<dbReference type="RefSeq" id="NP_034438.1">
    <molecule id="P18872-1"/>
    <property type="nucleotide sequence ID" value="NM_010308.4"/>
</dbReference>
<dbReference type="PDB" id="3C7K">
    <property type="method" value="X-ray"/>
    <property type="resolution" value="2.90 A"/>
    <property type="chains" value="A/C=22-354"/>
</dbReference>
<dbReference type="PDBsum" id="3C7K"/>
<dbReference type="SMR" id="P18872"/>
<dbReference type="BioGRID" id="199970">
    <property type="interactions" value="47"/>
</dbReference>
<dbReference type="DIP" id="DIP-29921N"/>
<dbReference type="FunCoup" id="P18872">
    <property type="interactions" value="1214"/>
</dbReference>
<dbReference type="IntAct" id="P18872">
    <property type="interactions" value="13"/>
</dbReference>
<dbReference type="MINT" id="P18872"/>
<dbReference type="STRING" id="10090.ENSMUSP00000148550"/>
<dbReference type="GlyGen" id="P18872">
    <property type="glycosylation" value="4 sites, 2 N-linked glycans (2 sites), 1 O-linked glycan (2 sites)"/>
</dbReference>
<dbReference type="iPTMnet" id="P18872"/>
<dbReference type="MetOSite" id="P18872"/>
<dbReference type="PhosphoSitePlus" id="P18872"/>
<dbReference type="SwissPalm" id="P18872"/>
<dbReference type="jPOST" id="P18872"/>
<dbReference type="PaxDb" id="10090-ENSMUSP00000114144"/>
<dbReference type="PeptideAtlas" id="P18872"/>
<dbReference type="ProteomicsDB" id="271021">
    <molecule id="P18872-1"/>
</dbReference>
<dbReference type="ProteomicsDB" id="271022">
    <molecule id="P18872-2"/>
</dbReference>
<dbReference type="Pumba" id="P18872"/>
<dbReference type="Antibodypedia" id="3649">
    <property type="antibodies" value="261 antibodies from 34 providers"/>
</dbReference>
<dbReference type="DNASU" id="14681"/>
<dbReference type="Ensembl" id="ENSMUST00000034198.15">
    <molecule id="P18872-1"/>
    <property type="protein sequence ID" value="ENSMUSP00000034198.9"/>
    <property type="gene ID" value="ENSMUSG00000031748.17"/>
</dbReference>
<dbReference type="Ensembl" id="ENSMUST00000125716.8">
    <molecule id="P18872-1"/>
    <property type="protein sequence ID" value="ENSMUSP00000114144.2"/>
    <property type="gene ID" value="ENSMUSG00000031748.17"/>
</dbReference>
<dbReference type="Ensembl" id="ENSMUST00000138659.9">
    <molecule id="P18872-2"/>
    <property type="protein sequence ID" value="ENSMUSP00000148550.2"/>
    <property type="gene ID" value="ENSMUSG00000031748.17"/>
</dbReference>
<dbReference type="GeneID" id="14681"/>
<dbReference type="KEGG" id="mmu:14681"/>
<dbReference type="UCSC" id="uc009mvk.2">
    <molecule id="P18872-2"/>
    <property type="organism name" value="mouse"/>
</dbReference>
<dbReference type="UCSC" id="uc009mvl.1">
    <molecule id="P18872-1"/>
    <property type="organism name" value="mouse"/>
</dbReference>
<dbReference type="AGR" id="MGI:95775"/>
<dbReference type="CTD" id="2775"/>
<dbReference type="MGI" id="MGI:95775">
    <property type="gene designation" value="Gnao1"/>
</dbReference>
<dbReference type="VEuPathDB" id="HostDB:ENSMUSG00000031748"/>
<dbReference type="eggNOG" id="KOG0082">
    <property type="taxonomic scope" value="Eukaryota"/>
</dbReference>
<dbReference type="GeneTree" id="ENSGT00940000155883"/>
<dbReference type="HOGENOM" id="CLU_014184_6_0_1"/>
<dbReference type="InParanoid" id="P18872"/>
<dbReference type="OMA" id="GKKDYMP"/>
<dbReference type="OrthoDB" id="5817230at2759"/>
<dbReference type="PhylomeDB" id="P18872"/>
<dbReference type="TreeFam" id="TF300673"/>
<dbReference type="Reactome" id="R-MMU-4086398">
    <property type="pathway name" value="Ca2+ pathway"/>
</dbReference>
<dbReference type="BioGRID-ORCS" id="14681">
    <property type="hits" value="2 hits in 77 CRISPR screens"/>
</dbReference>
<dbReference type="CD-CODE" id="CE726F99">
    <property type="entry name" value="Postsynaptic density"/>
</dbReference>
<dbReference type="ChiTaRS" id="Gnao1">
    <property type="organism name" value="mouse"/>
</dbReference>
<dbReference type="EvolutionaryTrace" id="P18872"/>
<dbReference type="PRO" id="PR:P18872"/>
<dbReference type="Proteomes" id="UP000000589">
    <property type="component" value="Chromosome 8"/>
</dbReference>
<dbReference type="RNAct" id="P18872">
    <property type="molecule type" value="protein"/>
</dbReference>
<dbReference type="Bgee" id="ENSMUSG00000031748">
    <property type="expression patterns" value="Expressed in perirhinal cortex and 234 other cell types or tissues"/>
</dbReference>
<dbReference type="ExpressionAtlas" id="P18872">
    <property type="expression patterns" value="baseline and differential"/>
</dbReference>
<dbReference type="GO" id="GO:0044297">
    <property type="term" value="C:cell body"/>
    <property type="evidence" value="ECO:0000314"/>
    <property type="project" value="MGI"/>
</dbReference>
<dbReference type="GO" id="GO:0030425">
    <property type="term" value="C:dendrite"/>
    <property type="evidence" value="ECO:0000314"/>
    <property type="project" value="MGI"/>
</dbReference>
<dbReference type="GO" id="GO:0098982">
    <property type="term" value="C:GABA-ergic synapse"/>
    <property type="evidence" value="ECO:0000314"/>
    <property type="project" value="SynGO"/>
</dbReference>
<dbReference type="GO" id="GO:0098978">
    <property type="term" value="C:glutamatergic synapse"/>
    <property type="evidence" value="ECO:0000314"/>
    <property type="project" value="SynGO"/>
</dbReference>
<dbReference type="GO" id="GO:0005834">
    <property type="term" value="C:heterotrimeric G-protein complex"/>
    <property type="evidence" value="ECO:0000304"/>
    <property type="project" value="MGI"/>
</dbReference>
<dbReference type="GO" id="GO:0016020">
    <property type="term" value="C:membrane"/>
    <property type="evidence" value="ECO:0000304"/>
    <property type="project" value="MGI"/>
</dbReference>
<dbReference type="GO" id="GO:0043209">
    <property type="term" value="C:myelin sheath"/>
    <property type="evidence" value="ECO:0007005"/>
    <property type="project" value="UniProtKB"/>
</dbReference>
<dbReference type="GO" id="GO:0098688">
    <property type="term" value="C:parallel fiber to Purkinje cell synapse"/>
    <property type="evidence" value="ECO:0000314"/>
    <property type="project" value="SynGO"/>
</dbReference>
<dbReference type="GO" id="GO:0005886">
    <property type="term" value="C:plasma membrane"/>
    <property type="evidence" value="ECO:0000304"/>
    <property type="project" value="Reactome"/>
</dbReference>
<dbReference type="GO" id="GO:0045211">
    <property type="term" value="C:postsynaptic membrane"/>
    <property type="evidence" value="ECO:0000314"/>
    <property type="project" value="SynGO"/>
</dbReference>
<dbReference type="GO" id="GO:0042734">
    <property type="term" value="C:presynaptic membrane"/>
    <property type="evidence" value="ECO:0000314"/>
    <property type="project" value="SynGO"/>
</dbReference>
<dbReference type="GO" id="GO:0003925">
    <property type="term" value="F:G protein activity"/>
    <property type="evidence" value="ECO:0000314"/>
    <property type="project" value="UniProtKB"/>
</dbReference>
<dbReference type="GO" id="GO:0031683">
    <property type="term" value="F:G-protein beta/gamma-subunit complex binding"/>
    <property type="evidence" value="ECO:0007669"/>
    <property type="project" value="InterPro"/>
</dbReference>
<dbReference type="GO" id="GO:0005525">
    <property type="term" value="F:GTP binding"/>
    <property type="evidence" value="ECO:0000315"/>
    <property type="project" value="MGI"/>
</dbReference>
<dbReference type="GO" id="GO:0003924">
    <property type="term" value="F:GTPase activity"/>
    <property type="evidence" value="ECO:0000304"/>
    <property type="project" value="MGI"/>
</dbReference>
<dbReference type="GO" id="GO:0046872">
    <property type="term" value="F:metal ion binding"/>
    <property type="evidence" value="ECO:0007669"/>
    <property type="project" value="UniProtKB-KW"/>
</dbReference>
<dbReference type="GO" id="GO:0099104">
    <property type="term" value="F:potassium channel activator activity"/>
    <property type="evidence" value="ECO:0000315"/>
    <property type="project" value="MGI"/>
</dbReference>
<dbReference type="GO" id="GO:0007198">
    <property type="term" value="P:adenylate cyclase-inhibiting serotonin receptor signaling pathway"/>
    <property type="evidence" value="ECO:0007669"/>
    <property type="project" value="Ensembl"/>
</dbReference>
<dbReference type="GO" id="GO:0007212">
    <property type="term" value="P:G protein-coupled dopamine receptor signaling pathway"/>
    <property type="evidence" value="ECO:0000315"/>
    <property type="project" value="MGI"/>
</dbReference>
<dbReference type="GO" id="GO:0007186">
    <property type="term" value="P:G protein-coupled receptor signaling pathway"/>
    <property type="evidence" value="ECO:0000315"/>
    <property type="project" value="MGI"/>
</dbReference>
<dbReference type="GO" id="GO:0007626">
    <property type="term" value="P:locomotory behavior"/>
    <property type="evidence" value="ECO:0000315"/>
    <property type="project" value="MGI"/>
</dbReference>
<dbReference type="GO" id="GO:0046676">
    <property type="term" value="P:negative regulation of insulin secretion"/>
    <property type="evidence" value="ECO:0000315"/>
    <property type="project" value="MGI"/>
</dbReference>
<dbReference type="GO" id="GO:0099170">
    <property type="term" value="P:postsynaptic modulation of chemical synaptic transmission"/>
    <property type="evidence" value="ECO:0000314"/>
    <property type="project" value="SynGO"/>
</dbReference>
<dbReference type="GO" id="GO:0008016">
    <property type="term" value="P:regulation of heart contraction"/>
    <property type="evidence" value="ECO:0000315"/>
    <property type="project" value="MGI"/>
</dbReference>
<dbReference type="GO" id="GO:0006904">
    <property type="term" value="P:vesicle docking involved in exocytosis"/>
    <property type="evidence" value="ECO:0000315"/>
    <property type="project" value="MGI"/>
</dbReference>
<dbReference type="CDD" id="cd00066">
    <property type="entry name" value="G-alpha"/>
    <property type="match status" value="1"/>
</dbReference>
<dbReference type="FunFam" id="3.40.50.300:FF:003559">
    <property type="entry name" value="Guanine nucleotide-binding protein G(i) subunit alpha-1"/>
    <property type="match status" value="1"/>
</dbReference>
<dbReference type="FunFam" id="3.40.50.300:FF:002307">
    <property type="entry name" value="Guanine nucleotide-binding protein G(k) subunit alpha"/>
    <property type="match status" value="1"/>
</dbReference>
<dbReference type="FunFam" id="1.10.400.10:FF:000020">
    <property type="entry name" value="Guanine nucleotide-binding protein G(o) subunit alpha"/>
    <property type="match status" value="1"/>
</dbReference>
<dbReference type="Gene3D" id="1.10.400.10">
    <property type="entry name" value="GI Alpha 1, domain 2-like"/>
    <property type="match status" value="1"/>
</dbReference>
<dbReference type="Gene3D" id="3.40.50.300">
    <property type="entry name" value="P-loop containing nucleotide triphosphate hydrolases"/>
    <property type="match status" value="1"/>
</dbReference>
<dbReference type="InterPro" id="IPR001408">
    <property type="entry name" value="Gprotein_alpha_I"/>
</dbReference>
<dbReference type="InterPro" id="IPR001019">
    <property type="entry name" value="Gprotein_alpha_su"/>
</dbReference>
<dbReference type="InterPro" id="IPR011025">
    <property type="entry name" value="GproteinA_insert"/>
</dbReference>
<dbReference type="InterPro" id="IPR027417">
    <property type="entry name" value="P-loop_NTPase"/>
</dbReference>
<dbReference type="PANTHER" id="PTHR10218">
    <property type="entry name" value="GTP-BINDING PROTEIN ALPHA SUBUNIT"/>
    <property type="match status" value="1"/>
</dbReference>
<dbReference type="PANTHER" id="PTHR10218:SF361">
    <property type="entry name" value="GUANINE NUCLEOTIDE-BINDING PROTEIN G(O) SUBUNIT ALPHA"/>
    <property type="match status" value="1"/>
</dbReference>
<dbReference type="Pfam" id="PF00503">
    <property type="entry name" value="G-alpha"/>
    <property type="match status" value="1"/>
</dbReference>
<dbReference type="PRINTS" id="PR00318">
    <property type="entry name" value="GPROTEINA"/>
</dbReference>
<dbReference type="PRINTS" id="PR00441">
    <property type="entry name" value="GPROTEINAI"/>
</dbReference>
<dbReference type="SMART" id="SM00275">
    <property type="entry name" value="G_alpha"/>
    <property type="match status" value="1"/>
</dbReference>
<dbReference type="SUPFAM" id="SSF52540">
    <property type="entry name" value="P-loop containing nucleoside triphosphate hydrolases"/>
    <property type="match status" value="1"/>
</dbReference>
<dbReference type="SUPFAM" id="SSF47895">
    <property type="entry name" value="Transducin (alpha subunit), insertion domain"/>
    <property type="match status" value="1"/>
</dbReference>
<dbReference type="PROSITE" id="PS51882">
    <property type="entry name" value="G_ALPHA"/>
    <property type="match status" value="1"/>
</dbReference>
<protein>
    <recommendedName>
        <fullName>Guanine nucleotide-binding protein G(o) subunit alpha</fullName>
        <ecNumber evidence="5">3.6.5.-</ecNumber>
    </recommendedName>
</protein>
<feature type="initiator methionine" description="Removed" evidence="2">
    <location>
        <position position="1"/>
    </location>
</feature>
<feature type="chain" id="PRO_0000203704" description="Guanine nucleotide-binding protein G(o) subunit alpha">
    <location>
        <begin position="2"/>
        <end position="354"/>
    </location>
</feature>
<feature type="domain" description="G-alpha" evidence="4">
    <location>
        <begin position="32"/>
        <end position="354"/>
    </location>
</feature>
<feature type="region of interest" description="G1 motif" evidence="4">
    <location>
        <begin position="35"/>
        <end position="48"/>
    </location>
</feature>
<feature type="region of interest" description="G2 motif" evidence="4">
    <location>
        <begin position="174"/>
        <end position="182"/>
    </location>
</feature>
<feature type="region of interest" description="G3 motif" evidence="4">
    <location>
        <begin position="197"/>
        <end position="206"/>
    </location>
</feature>
<feature type="region of interest" description="G4 motif" evidence="4">
    <location>
        <begin position="266"/>
        <end position="273"/>
    </location>
</feature>
<feature type="region of interest" description="G5 motif" evidence="4">
    <location>
        <begin position="324"/>
        <end position="329"/>
    </location>
</feature>
<feature type="binding site" evidence="11 12">
    <location>
        <position position="43"/>
    </location>
    <ligand>
        <name>GTP</name>
        <dbReference type="ChEBI" id="CHEBI:37565"/>
    </ligand>
</feature>
<feature type="binding site" evidence="11 12">
    <location>
        <position position="46"/>
    </location>
    <ligand>
        <name>GTP</name>
        <dbReference type="ChEBI" id="CHEBI:37565"/>
    </ligand>
</feature>
<feature type="binding site" evidence="11 12">
    <location>
        <position position="47"/>
    </location>
    <ligand>
        <name>GTP</name>
        <dbReference type="ChEBI" id="CHEBI:37565"/>
    </ligand>
</feature>
<feature type="binding site" evidence="7 12">
    <location>
        <position position="47"/>
    </location>
    <ligand>
        <name>Mg(2+)</name>
        <dbReference type="ChEBI" id="CHEBI:18420"/>
    </ligand>
</feature>
<feature type="binding site" evidence="11 12">
    <location>
        <position position="48"/>
    </location>
    <ligand>
        <name>GTP</name>
        <dbReference type="ChEBI" id="CHEBI:37565"/>
    </ligand>
</feature>
<feature type="binding site" evidence="11 12">
    <location>
        <position position="152"/>
    </location>
    <ligand>
        <name>GTP</name>
        <dbReference type="ChEBI" id="CHEBI:37565"/>
    </ligand>
</feature>
<feature type="binding site" evidence="11 12">
    <location>
        <position position="176"/>
    </location>
    <ligand>
        <name>GTP</name>
        <dbReference type="ChEBI" id="CHEBI:37565"/>
    </ligand>
</feature>
<feature type="binding site" evidence="11 12">
    <location>
        <position position="177"/>
    </location>
    <ligand>
        <name>GTP</name>
        <dbReference type="ChEBI" id="CHEBI:37565"/>
    </ligand>
</feature>
<feature type="binding site" evidence="11 12">
    <location>
        <position position="178"/>
    </location>
    <ligand>
        <name>GTP</name>
        <dbReference type="ChEBI" id="CHEBI:37565"/>
    </ligand>
</feature>
<feature type="binding site" evidence="11 12">
    <location>
        <position position="179"/>
    </location>
    <ligand>
        <name>GTP</name>
        <dbReference type="ChEBI" id="CHEBI:37565"/>
    </ligand>
</feature>
<feature type="binding site" evidence="7 12">
    <location>
        <position position="182"/>
    </location>
    <ligand>
        <name>Mg(2+)</name>
        <dbReference type="ChEBI" id="CHEBI:18420"/>
    </ligand>
</feature>
<feature type="binding site" evidence="11 12">
    <location>
        <position position="270"/>
    </location>
    <ligand>
        <name>GTP</name>
        <dbReference type="ChEBI" id="CHEBI:37565"/>
    </ligand>
</feature>
<feature type="binding site" evidence="11 12">
    <location>
        <position position="273"/>
    </location>
    <ligand>
        <name>GTP</name>
        <dbReference type="ChEBI" id="CHEBI:37565"/>
    </ligand>
</feature>
<feature type="binding site" evidence="11 12">
    <location>
        <position position="325"/>
    </location>
    <ligand>
        <name>GTP</name>
        <dbReference type="ChEBI" id="CHEBI:37565"/>
    </ligand>
</feature>
<feature type="modified residue" description="5-glutamyl histamine" evidence="8">
    <location>
        <position position="205"/>
    </location>
</feature>
<feature type="lipid moiety-binding region" description="N-myristoyl glycine" evidence="3">
    <location>
        <position position="2"/>
    </location>
</feature>
<feature type="lipid moiety-binding region" description="S-palmitoyl cysteine" evidence="1">
    <location>
        <position position="3"/>
    </location>
</feature>
<feature type="lipid moiety-binding region" description="S-palmitoyl cysteine" evidence="3">
    <location>
        <position position="351"/>
    </location>
</feature>
<feature type="splice variant" id="VSP_031251" description="In isoform Alpha-2." evidence="9">
    <original>MLFDSICNNKFFIDTSIILFLNKKDLFGEKIKKSPLTICFPEYPGSNTYEDAAAYIQTQFESKNRSPNKEIYCHMTCATDTNNIQVVFDAVTDIIIANNLRGCGLY</original>
    <variation>KLFDSICNNKWFTDTSIILFLNKKDIFEEKIKKSPLTICFPEYTGPSAFTEAVAHIQGQYESKNKSAHKEVYSHVTCATDTNNIQFVFDAVTDVIIAKNLRGCGLY</variation>
    <location>
        <begin position="249"/>
        <end position="354"/>
    </location>
</feature>
<feature type="strand" evidence="13">
    <location>
        <begin position="36"/>
        <end position="41"/>
    </location>
</feature>
<feature type="turn" evidence="13">
    <location>
        <begin position="46"/>
        <end position="49"/>
    </location>
</feature>
<feature type="helix" evidence="13">
    <location>
        <begin position="50"/>
        <end position="52"/>
    </location>
</feature>
<feature type="helix" evidence="13">
    <location>
        <begin position="63"/>
        <end position="91"/>
    </location>
</feature>
<feature type="helix" evidence="13">
    <location>
        <begin position="100"/>
        <end position="113"/>
    </location>
</feature>
<feature type="turn" evidence="13">
    <location>
        <begin position="114"/>
        <end position="116"/>
    </location>
</feature>
<feature type="helix" evidence="13">
    <location>
        <begin position="122"/>
        <end position="131"/>
    </location>
</feature>
<feature type="helix" evidence="13">
    <location>
        <begin position="135"/>
        <end position="141"/>
    </location>
</feature>
<feature type="turn" evidence="13">
    <location>
        <begin position="142"/>
        <end position="145"/>
    </location>
</feature>
<feature type="helix" evidence="13">
    <location>
        <begin position="153"/>
        <end position="157"/>
    </location>
</feature>
<feature type="helix" evidence="13">
    <location>
        <begin position="160"/>
        <end position="163"/>
    </location>
</feature>
<feature type="turn" evidence="13">
    <location>
        <begin position="172"/>
        <end position="176"/>
    </location>
</feature>
<feature type="strand" evidence="13">
    <location>
        <begin position="186"/>
        <end position="188"/>
    </location>
</feature>
<feature type="strand" evidence="13">
    <location>
        <begin position="199"/>
        <end position="201"/>
    </location>
</feature>
<feature type="turn" evidence="13">
    <location>
        <begin position="206"/>
        <end position="208"/>
    </location>
</feature>
<feature type="helix" evidence="13">
    <location>
        <begin position="209"/>
        <end position="212"/>
    </location>
</feature>
<feature type="helix" evidence="13">
    <location>
        <begin position="214"/>
        <end position="216"/>
    </location>
</feature>
<feature type="strand" evidence="13">
    <location>
        <begin position="220"/>
        <end position="225"/>
    </location>
</feature>
<feature type="helix" evidence="13">
    <location>
        <begin position="228"/>
        <end position="232"/>
    </location>
</feature>
<feature type="strand" evidence="13">
    <location>
        <begin position="239"/>
        <end position="242"/>
    </location>
</feature>
<feature type="helix" evidence="13">
    <location>
        <begin position="243"/>
        <end position="255"/>
    </location>
</feature>
<feature type="helix" evidence="13">
    <location>
        <begin position="258"/>
        <end position="260"/>
    </location>
</feature>
<feature type="strand" evidence="13">
    <location>
        <begin position="263"/>
        <end position="268"/>
    </location>
</feature>
<feature type="helix" evidence="13">
    <location>
        <begin position="272"/>
        <end position="279"/>
    </location>
</feature>
<feature type="helix" evidence="13">
    <location>
        <begin position="284"/>
        <end position="286"/>
    </location>
</feature>
<feature type="helix" evidence="13">
    <location>
        <begin position="297"/>
        <end position="310"/>
    </location>
</feature>
<feature type="helix" evidence="13">
    <location>
        <begin position="329"/>
        <end position="344"/>
    </location>
</feature>
<evidence type="ECO:0000250" key="1"/>
<evidence type="ECO:0000250" key="2">
    <source>
        <dbReference type="UniProtKB" id="P08239"/>
    </source>
</evidence>
<evidence type="ECO:0000250" key="3">
    <source>
        <dbReference type="UniProtKB" id="P09471"/>
    </source>
</evidence>
<evidence type="ECO:0000255" key="4">
    <source>
        <dbReference type="PROSITE-ProRule" id="PRU01230"/>
    </source>
</evidence>
<evidence type="ECO:0000269" key="5">
    <source>
    </source>
</evidence>
<evidence type="ECO:0000269" key="6">
    <source>
    </source>
</evidence>
<evidence type="ECO:0000269" key="7">
    <source>
    </source>
</evidence>
<evidence type="ECO:0000269" key="8">
    <source>
    </source>
</evidence>
<evidence type="ECO:0000303" key="9">
    <source>
    </source>
</evidence>
<evidence type="ECO:0000305" key="10"/>
<evidence type="ECO:0000305" key="11">
    <source>
    </source>
</evidence>
<evidence type="ECO:0007744" key="12">
    <source>
        <dbReference type="PDB" id="3C7K"/>
    </source>
</evidence>
<evidence type="ECO:0007829" key="13">
    <source>
        <dbReference type="PDB" id="3C7K"/>
    </source>
</evidence>
<reference key="1">
    <citation type="journal article" date="1990" name="Proc. Natl. Acad. Sci. U.S.A.">
        <title>Alternative splicing produces transcripts encoding two forms of the alpha subunit of GTP-binding protein Go.</title>
        <authorList>
            <person name="Strathmann M."/>
            <person name="Wilkie T.M."/>
            <person name="Simon M.I."/>
        </authorList>
    </citation>
    <scope>NUCLEOTIDE SEQUENCE [MRNA] (ISOFORMS ALPHA-1 AND ALPHA-2)</scope>
    <source>
        <tissue>Brain</tissue>
        <tissue>Spermatid</tissue>
    </source>
</reference>
<reference key="2">
    <citation type="journal article" date="2004" name="Genome Res.">
        <title>The status, quality, and expansion of the NIH full-length cDNA project: the Mammalian Gene Collection (MGC).</title>
        <authorList>
            <consortium name="The MGC Project Team"/>
        </authorList>
    </citation>
    <scope>NUCLEOTIDE SEQUENCE [LARGE SCALE MRNA] (ISOFORM ALPHA-1)</scope>
    <source>
        <strain>C57BL/6J</strain>
        <tissue>Brain</tissue>
    </source>
</reference>
<reference key="3">
    <citation type="submission" date="2007-04" db="UniProtKB">
        <authorList>
            <person name="Lubec G."/>
            <person name="Klug S."/>
            <person name="Kang S.U."/>
        </authorList>
    </citation>
    <scope>PROTEIN SEQUENCE OF 22-32; 36-46; 55-100; 106-143; 146-177; 182-193; 199-206 AND 244-272</scope>
    <scope>IDENTIFICATION BY MASS SPECTROMETRY</scope>
    <source>
        <strain>C57BL/6J</strain>
        <tissue>Brain</tissue>
        <tissue>Hippocampus</tissue>
    </source>
</reference>
<reference key="4">
    <citation type="journal article" date="2000" name="Biochem. J.">
        <title>RGS14 is a novel Rap effector that preferentially regulates the GTPase activity of galphao.</title>
        <authorList>
            <person name="Traver S."/>
            <person name="Bidot C."/>
            <person name="Spassky N."/>
            <person name="Baltauss T."/>
            <person name="De Tand M.F."/>
            <person name="Thomas J.L."/>
            <person name="Zalc B."/>
            <person name="Janoueix-Lerosey I."/>
            <person name="Gunzburg J.D."/>
        </authorList>
    </citation>
    <scope>FUNCTION</scope>
    <scope>CATALYTIC ACTIVITY</scope>
    <scope>ACTIVITY REGULATION</scope>
    <scope>INTERACTION WITH RGS14</scope>
</reference>
<reference key="5">
    <citation type="journal article" date="2005" name="Mol. Pharmacol.">
        <title>Functional characterization of Galphao signaling through G protein-regulated inducer of neurite outgrowth 1.</title>
        <authorList>
            <person name="Nakata H."/>
            <person name="Kozasa T."/>
        </authorList>
    </citation>
    <scope>SUBCELLULAR LOCATION</scope>
</reference>
<reference key="6">
    <citation type="journal article" date="2010" name="Cell">
        <title>A tissue-specific atlas of mouse protein phosphorylation and expression.</title>
        <authorList>
            <person name="Huttlin E.L."/>
            <person name="Jedrychowski M.P."/>
            <person name="Elias J.E."/>
            <person name="Goswami T."/>
            <person name="Rad R."/>
            <person name="Beausoleil S.A."/>
            <person name="Villen J."/>
            <person name="Haas W."/>
            <person name="Sowa M.E."/>
            <person name="Gygi S.P."/>
        </authorList>
    </citation>
    <scope>IDENTIFICATION BY MASS SPECTROMETRY [LARGE SCALE ANALYSIS]</scope>
    <source>
        <tissue>Brain</tissue>
        <tissue>Brown adipose tissue</tissue>
        <tissue>Heart</tissue>
        <tissue>Kidney</tissue>
        <tissue>Liver</tissue>
        <tissue>Lung</tissue>
        <tissue>Testis</tissue>
    </source>
</reference>
<reference key="7">
    <citation type="journal article" date="2012" name="FEBS Lett.">
        <title>Histaminylation of glutamine residues is a novel posttranslational modification implicated in G-protein signaling.</title>
        <authorList>
            <person name="Vowinckel J."/>
            <person name="Stahlberg S."/>
            <person name="Paulmann N."/>
            <person name="Bluemlein K."/>
            <person name="Grohmann M."/>
            <person name="Ralser M."/>
            <person name="Walther D.J."/>
        </authorList>
    </citation>
    <scope>HISTAMINYLATION AT GLN-205</scope>
</reference>
<reference evidence="12" key="8">
    <citation type="journal article" date="2008" name="Proc. Natl. Acad. Sci. U.S.A.">
        <title>Molecular architecture of Galphao and the structural basis for RGS16-mediated deactivation.</title>
        <authorList>
            <person name="Slep K.C."/>
            <person name="Kercher M.A."/>
            <person name="Wieland T."/>
            <person name="Chen C.K."/>
            <person name="Simon M.I."/>
            <person name="Sigler P.B."/>
        </authorList>
    </citation>
    <scope>X-RAY CRYSTALLOGRAPHY (1.89 ANGSTROMS) OF 22-354 IN COMPLEX WITH GDP; MAGNESIUM AND RGS16</scope>
    <scope>INTERACTION WITH RGS16</scope>
</reference>